<reference key="1">
    <citation type="journal article" date="2000" name="Science">
        <title>The genome sequence of Drosophila melanogaster.</title>
        <authorList>
            <person name="Adams M.D."/>
            <person name="Celniker S.E."/>
            <person name="Holt R.A."/>
            <person name="Evans C.A."/>
            <person name="Gocayne J.D."/>
            <person name="Amanatides P.G."/>
            <person name="Scherer S.E."/>
            <person name="Li P.W."/>
            <person name="Hoskins R.A."/>
            <person name="Galle R.F."/>
            <person name="George R.A."/>
            <person name="Lewis S.E."/>
            <person name="Richards S."/>
            <person name="Ashburner M."/>
            <person name="Henderson S.N."/>
            <person name="Sutton G.G."/>
            <person name="Wortman J.R."/>
            <person name="Yandell M.D."/>
            <person name="Zhang Q."/>
            <person name="Chen L.X."/>
            <person name="Brandon R.C."/>
            <person name="Rogers Y.-H.C."/>
            <person name="Blazej R.G."/>
            <person name="Champe M."/>
            <person name="Pfeiffer B.D."/>
            <person name="Wan K.H."/>
            <person name="Doyle C."/>
            <person name="Baxter E.G."/>
            <person name="Helt G."/>
            <person name="Nelson C.R."/>
            <person name="Miklos G.L.G."/>
            <person name="Abril J.F."/>
            <person name="Agbayani A."/>
            <person name="An H.-J."/>
            <person name="Andrews-Pfannkoch C."/>
            <person name="Baldwin D."/>
            <person name="Ballew R.M."/>
            <person name="Basu A."/>
            <person name="Baxendale J."/>
            <person name="Bayraktaroglu L."/>
            <person name="Beasley E.M."/>
            <person name="Beeson K.Y."/>
            <person name="Benos P.V."/>
            <person name="Berman B.P."/>
            <person name="Bhandari D."/>
            <person name="Bolshakov S."/>
            <person name="Borkova D."/>
            <person name="Botchan M.R."/>
            <person name="Bouck J."/>
            <person name="Brokstein P."/>
            <person name="Brottier P."/>
            <person name="Burtis K.C."/>
            <person name="Busam D.A."/>
            <person name="Butler H."/>
            <person name="Cadieu E."/>
            <person name="Center A."/>
            <person name="Chandra I."/>
            <person name="Cherry J.M."/>
            <person name="Cawley S."/>
            <person name="Dahlke C."/>
            <person name="Davenport L.B."/>
            <person name="Davies P."/>
            <person name="de Pablos B."/>
            <person name="Delcher A."/>
            <person name="Deng Z."/>
            <person name="Mays A.D."/>
            <person name="Dew I."/>
            <person name="Dietz S.M."/>
            <person name="Dodson K."/>
            <person name="Doup L.E."/>
            <person name="Downes M."/>
            <person name="Dugan-Rocha S."/>
            <person name="Dunkov B.C."/>
            <person name="Dunn P."/>
            <person name="Durbin K.J."/>
            <person name="Evangelista C.C."/>
            <person name="Ferraz C."/>
            <person name="Ferriera S."/>
            <person name="Fleischmann W."/>
            <person name="Fosler C."/>
            <person name="Gabrielian A.E."/>
            <person name="Garg N.S."/>
            <person name="Gelbart W.M."/>
            <person name="Glasser K."/>
            <person name="Glodek A."/>
            <person name="Gong F."/>
            <person name="Gorrell J.H."/>
            <person name="Gu Z."/>
            <person name="Guan P."/>
            <person name="Harris M."/>
            <person name="Harris N.L."/>
            <person name="Harvey D.A."/>
            <person name="Heiman T.J."/>
            <person name="Hernandez J.R."/>
            <person name="Houck J."/>
            <person name="Hostin D."/>
            <person name="Houston K.A."/>
            <person name="Howland T.J."/>
            <person name="Wei M.-H."/>
            <person name="Ibegwam C."/>
            <person name="Jalali M."/>
            <person name="Kalush F."/>
            <person name="Karpen G.H."/>
            <person name="Ke Z."/>
            <person name="Kennison J.A."/>
            <person name="Ketchum K.A."/>
            <person name="Kimmel B.E."/>
            <person name="Kodira C.D."/>
            <person name="Kraft C.L."/>
            <person name="Kravitz S."/>
            <person name="Kulp D."/>
            <person name="Lai Z."/>
            <person name="Lasko P."/>
            <person name="Lei Y."/>
            <person name="Levitsky A.A."/>
            <person name="Li J.H."/>
            <person name="Li Z."/>
            <person name="Liang Y."/>
            <person name="Lin X."/>
            <person name="Liu X."/>
            <person name="Mattei B."/>
            <person name="McIntosh T.C."/>
            <person name="McLeod M.P."/>
            <person name="McPherson D."/>
            <person name="Merkulov G."/>
            <person name="Milshina N.V."/>
            <person name="Mobarry C."/>
            <person name="Morris J."/>
            <person name="Moshrefi A."/>
            <person name="Mount S.M."/>
            <person name="Moy M."/>
            <person name="Murphy B."/>
            <person name="Murphy L."/>
            <person name="Muzny D.M."/>
            <person name="Nelson D.L."/>
            <person name="Nelson D.R."/>
            <person name="Nelson K.A."/>
            <person name="Nixon K."/>
            <person name="Nusskern D.R."/>
            <person name="Pacleb J.M."/>
            <person name="Palazzolo M."/>
            <person name="Pittman G.S."/>
            <person name="Pan S."/>
            <person name="Pollard J."/>
            <person name="Puri V."/>
            <person name="Reese M.G."/>
            <person name="Reinert K."/>
            <person name="Remington K."/>
            <person name="Saunders R.D.C."/>
            <person name="Scheeler F."/>
            <person name="Shen H."/>
            <person name="Shue B.C."/>
            <person name="Siden-Kiamos I."/>
            <person name="Simpson M."/>
            <person name="Skupski M.P."/>
            <person name="Smith T.J."/>
            <person name="Spier E."/>
            <person name="Spradling A.C."/>
            <person name="Stapleton M."/>
            <person name="Strong R."/>
            <person name="Sun E."/>
            <person name="Svirskas R."/>
            <person name="Tector C."/>
            <person name="Turner R."/>
            <person name="Venter E."/>
            <person name="Wang A.H."/>
            <person name="Wang X."/>
            <person name="Wang Z.-Y."/>
            <person name="Wassarman D.A."/>
            <person name="Weinstock G.M."/>
            <person name="Weissenbach J."/>
            <person name="Williams S.M."/>
            <person name="Woodage T."/>
            <person name="Worley K.C."/>
            <person name="Wu D."/>
            <person name="Yang S."/>
            <person name="Yao Q.A."/>
            <person name="Ye J."/>
            <person name="Yeh R.-F."/>
            <person name="Zaveri J.S."/>
            <person name="Zhan M."/>
            <person name="Zhang G."/>
            <person name="Zhao Q."/>
            <person name="Zheng L."/>
            <person name="Zheng X.H."/>
            <person name="Zhong F.N."/>
            <person name="Zhong W."/>
            <person name="Zhou X."/>
            <person name="Zhu S.C."/>
            <person name="Zhu X."/>
            <person name="Smith H.O."/>
            <person name="Gibbs R.A."/>
            <person name="Myers E.W."/>
            <person name="Rubin G.M."/>
            <person name="Venter J.C."/>
        </authorList>
    </citation>
    <scope>NUCLEOTIDE SEQUENCE [LARGE SCALE GENOMIC DNA]</scope>
    <source>
        <strain>Berkeley</strain>
    </source>
</reference>
<reference key="2">
    <citation type="journal article" date="2002" name="Genome Biol.">
        <title>Annotation of the Drosophila melanogaster euchromatic genome: a systematic review.</title>
        <authorList>
            <person name="Misra S."/>
            <person name="Crosby M.A."/>
            <person name="Mungall C.J."/>
            <person name="Matthews B.B."/>
            <person name="Campbell K.S."/>
            <person name="Hradecky P."/>
            <person name="Huang Y."/>
            <person name="Kaminker J.S."/>
            <person name="Millburn G.H."/>
            <person name="Prochnik S.E."/>
            <person name="Smith C.D."/>
            <person name="Tupy J.L."/>
            <person name="Whitfield E.J."/>
            <person name="Bayraktaroglu L."/>
            <person name="Berman B.P."/>
            <person name="Bettencourt B.R."/>
            <person name="Celniker S.E."/>
            <person name="de Grey A.D.N.J."/>
            <person name="Drysdale R.A."/>
            <person name="Harris N.L."/>
            <person name="Richter J."/>
            <person name="Russo S."/>
            <person name="Schroeder A.J."/>
            <person name="Shu S.Q."/>
            <person name="Stapleton M."/>
            <person name="Yamada C."/>
            <person name="Ashburner M."/>
            <person name="Gelbart W.M."/>
            <person name="Rubin G.M."/>
            <person name="Lewis S.E."/>
        </authorList>
    </citation>
    <scope>GENOME REANNOTATION</scope>
    <source>
        <strain>Berkeley</strain>
    </source>
</reference>
<reference key="3">
    <citation type="submission" date="2006-08" db="EMBL/GenBank/DDBJ databases">
        <authorList>
            <person name="Stapleton M."/>
            <person name="Carlson J.W."/>
            <person name="Chavez C."/>
            <person name="Frise E."/>
            <person name="George R.A."/>
            <person name="Pacleb J.M."/>
            <person name="Park S."/>
            <person name="Wan K.H."/>
            <person name="Yu C."/>
            <person name="Celniker S.E."/>
        </authorList>
    </citation>
    <scope>NUCLEOTIDE SEQUENCE [LARGE SCALE MRNA]</scope>
    <source>
        <strain>Berkeley</strain>
    </source>
</reference>
<accession>Q9VIZ0</accession>
<accession>Q0IGY9</accession>
<sequence length="105" mass="11868">MGALAELAGDEKNGEGSRTFVFTNEGHTLGNALKTIIARYPEVDFCGYTIPHPTEQKLHFRIQSRRDRAIDILKRGLEDLEGLCDHTIVTFEKEMAEFNAMKVEN</sequence>
<keyword id="KW-0240">DNA-directed RNA polymerase</keyword>
<keyword id="KW-0539">Nucleus</keyword>
<keyword id="KW-1185">Reference proteome</keyword>
<keyword id="KW-0804">Transcription</keyword>
<evidence type="ECO:0000250" key="1"/>
<evidence type="ECO:0000305" key="2"/>
<evidence type="ECO:0000312" key="3">
    <source>
        <dbReference type="FlyBase" id="FBgn0086447"/>
    </source>
</evidence>
<gene>
    <name evidence="3" type="primary">Polr1D</name>
    <name evidence="3" type="synonym">l(2)37Cg</name>
    <name evidence="3" type="ORF">CG10685</name>
</gene>
<feature type="chain" id="PRO_0000232467" description="DNA-directed RNA polymerases I and III subunit RPAC2">
    <location>
        <begin position="1"/>
        <end position="105"/>
    </location>
</feature>
<name>RPAC2_DROME</name>
<protein>
    <recommendedName>
        <fullName>DNA-directed RNA polymerases I and III subunit RPAC2</fullName>
        <shortName>RNA polymerases I and III subunit AC2</shortName>
    </recommendedName>
    <alternativeName>
        <fullName>AC19</fullName>
    </alternativeName>
    <alternativeName>
        <fullName>DNA-directed RNA polymerase I subunit D</fullName>
    </alternativeName>
    <alternativeName>
        <fullName evidence="3">RNA polymerase I and III subunit D</fullName>
    </alternativeName>
</protein>
<comment type="function">
    <text evidence="1">DNA-dependent RNA polymerase catalyzes the transcription of DNA into RNA using the four ribonucleoside triphosphates as substrates. Common core component of RNA polymerases I and III which synthesize ribosomal RNA precursors and small RNAs, such as 5S rRNA and tRNAs, respectively (By similarity).</text>
</comment>
<comment type="subunit">
    <text evidence="1">Component of the RNA polymerase I (Pol I) and RNA polymerase III (Pol III) complexes consisting of at least 13 and 17 subunits, respectively.</text>
</comment>
<comment type="interaction">
    <interactant intactId="EBI-89092">
        <id>Q9VIZ0</id>
    </interactant>
    <interactant intactId="EBI-136073">
        <id>Q9VMX3</id>
        <label>Polr1C</label>
    </interactant>
    <organismsDiffer>false</organismsDiffer>
    <experiments>4</experiments>
</comment>
<comment type="subcellular location">
    <subcellularLocation>
        <location evidence="1">Nucleus</location>
    </subcellularLocation>
</comment>
<comment type="similarity">
    <text evidence="2">Belongs to the archaeal Rpo11/eukaryotic RPB11/RPC19 RNA polymerase subunit family.</text>
</comment>
<organism>
    <name type="scientific">Drosophila melanogaster</name>
    <name type="common">Fruit fly</name>
    <dbReference type="NCBI Taxonomy" id="7227"/>
    <lineage>
        <taxon>Eukaryota</taxon>
        <taxon>Metazoa</taxon>
        <taxon>Ecdysozoa</taxon>
        <taxon>Arthropoda</taxon>
        <taxon>Hexapoda</taxon>
        <taxon>Insecta</taxon>
        <taxon>Pterygota</taxon>
        <taxon>Neoptera</taxon>
        <taxon>Endopterygota</taxon>
        <taxon>Diptera</taxon>
        <taxon>Brachycera</taxon>
        <taxon>Muscomorpha</taxon>
        <taxon>Ephydroidea</taxon>
        <taxon>Drosophilidae</taxon>
        <taxon>Drosophila</taxon>
        <taxon>Sophophora</taxon>
    </lineage>
</organism>
<dbReference type="EMBL" id="AE014134">
    <property type="protein sequence ID" value="AAF53770.1"/>
    <property type="molecule type" value="Genomic_DNA"/>
</dbReference>
<dbReference type="EMBL" id="BT028781">
    <property type="protein sequence ID" value="ABI34162.1"/>
    <property type="molecule type" value="mRNA"/>
</dbReference>
<dbReference type="RefSeq" id="NP_609950.1">
    <property type="nucleotide sequence ID" value="NM_136106.2"/>
</dbReference>
<dbReference type="SMR" id="Q9VIZ0"/>
<dbReference type="BioGRID" id="61180">
    <property type="interactions" value="16"/>
</dbReference>
<dbReference type="ComplexPortal" id="CPX-2602">
    <property type="entry name" value="DNA-directed RNA polymerase I complex"/>
</dbReference>
<dbReference type="ComplexPortal" id="CPX-2628">
    <property type="entry name" value="DNA-directed RNA polymerase III complex"/>
</dbReference>
<dbReference type="FunCoup" id="Q9VIZ0">
    <property type="interactions" value="805"/>
</dbReference>
<dbReference type="IntAct" id="Q9VIZ0">
    <property type="interactions" value="9"/>
</dbReference>
<dbReference type="STRING" id="7227.FBpp0307611"/>
<dbReference type="PaxDb" id="7227-FBpp0304829"/>
<dbReference type="DNASU" id="35196"/>
<dbReference type="EnsemblMetazoa" id="FBtr0081161">
    <property type="protein sequence ID" value="FBpp0080704"/>
    <property type="gene ID" value="FBgn0086447"/>
</dbReference>
<dbReference type="GeneID" id="35196"/>
<dbReference type="KEGG" id="dme:Dmel_CG10685"/>
<dbReference type="AGR" id="FB:FBgn0086447"/>
<dbReference type="CTD" id="51082"/>
<dbReference type="FlyBase" id="FBgn0086447">
    <property type="gene designation" value="Polr1D"/>
</dbReference>
<dbReference type="VEuPathDB" id="VectorBase:FBgn0086447"/>
<dbReference type="eggNOG" id="KOG3438">
    <property type="taxonomic scope" value="Eukaryota"/>
</dbReference>
<dbReference type="GeneTree" id="ENSGT00550000075160"/>
<dbReference type="HOGENOM" id="CLU_090381_4_2_1"/>
<dbReference type="InParanoid" id="Q9VIZ0"/>
<dbReference type="OrthoDB" id="510325at2759"/>
<dbReference type="PhylomeDB" id="Q9VIZ0"/>
<dbReference type="SignaLink" id="Q9VIZ0"/>
<dbReference type="BioGRID-ORCS" id="35196">
    <property type="hits" value="1 hit in 1 CRISPR screen"/>
</dbReference>
<dbReference type="GenomeRNAi" id="35196"/>
<dbReference type="PRO" id="PR:Q9VIZ0"/>
<dbReference type="Proteomes" id="UP000000803">
    <property type="component" value="Chromosome 2L"/>
</dbReference>
<dbReference type="Bgee" id="FBgn0086447">
    <property type="expression patterns" value="Expressed in posterior terminal follicle cell in ovary and 73 other cell types or tissues"/>
</dbReference>
<dbReference type="ExpressionAtlas" id="Q9VIZ0">
    <property type="expression patterns" value="baseline and differential"/>
</dbReference>
<dbReference type="GO" id="GO:0005736">
    <property type="term" value="C:RNA polymerase I complex"/>
    <property type="evidence" value="ECO:0000250"/>
    <property type="project" value="UniProtKB"/>
</dbReference>
<dbReference type="GO" id="GO:0005666">
    <property type="term" value="C:RNA polymerase III complex"/>
    <property type="evidence" value="ECO:0000250"/>
    <property type="project" value="UniProtKB"/>
</dbReference>
<dbReference type="GO" id="GO:0003677">
    <property type="term" value="F:DNA binding"/>
    <property type="evidence" value="ECO:0007669"/>
    <property type="project" value="InterPro"/>
</dbReference>
<dbReference type="GO" id="GO:0003899">
    <property type="term" value="F:DNA-directed RNA polymerase activity"/>
    <property type="evidence" value="ECO:0007669"/>
    <property type="project" value="InterPro"/>
</dbReference>
<dbReference type="GO" id="GO:0046983">
    <property type="term" value="F:protein dimerization activity"/>
    <property type="evidence" value="ECO:0007669"/>
    <property type="project" value="InterPro"/>
</dbReference>
<dbReference type="GO" id="GO:0006360">
    <property type="term" value="P:transcription by RNA polymerase I"/>
    <property type="evidence" value="ECO:0000250"/>
    <property type="project" value="UniProtKB"/>
</dbReference>
<dbReference type="GO" id="GO:0006383">
    <property type="term" value="P:transcription by RNA polymerase III"/>
    <property type="evidence" value="ECO:0000318"/>
    <property type="project" value="GO_Central"/>
</dbReference>
<dbReference type="GO" id="GO:0006362">
    <property type="term" value="P:transcription elongation by RNA polymerase I"/>
    <property type="evidence" value="ECO:0000318"/>
    <property type="project" value="GO_Central"/>
</dbReference>
<dbReference type="GO" id="GO:0042797">
    <property type="term" value="P:tRNA transcription by RNA polymerase III"/>
    <property type="evidence" value="ECO:0000250"/>
    <property type="project" value="FlyBase"/>
</dbReference>
<dbReference type="CDD" id="cd07029">
    <property type="entry name" value="RNAP_I_III_AC19"/>
    <property type="match status" value="1"/>
</dbReference>
<dbReference type="FunFam" id="3.30.1360.10:FF:000006">
    <property type="entry name" value="DNA-directed RNA polymerases I and III subunit RPAC2"/>
    <property type="match status" value="1"/>
</dbReference>
<dbReference type="Gene3D" id="3.30.1360.10">
    <property type="entry name" value="RNA polymerase, RBP11-like subunit"/>
    <property type="match status" value="1"/>
</dbReference>
<dbReference type="HAMAP" id="MF_00261">
    <property type="entry name" value="RNApol_arch_Rpo11"/>
    <property type="match status" value="1"/>
</dbReference>
<dbReference type="InterPro" id="IPR036603">
    <property type="entry name" value="RBP11-like"/>
</dbReference>
<dbReference type="InterPro" id="IPR009025">
    <property type="entry name" value="RBP11-like_dimer"/>
</dbReference>
<dbReference type="InterPro" id="IPR008193">
    <property type="entry name" value="RNA_pol_Rpb11_13-16kDa_CS"/>
</dbReference>
<dbReference type="InterPro" id="IPR033898">
    <property type="entry name" value="RNAP_AC19"/>
</dbReference>
<dbReference type="InterPro" id="IPR022905">
    <property type="entry name" value="Rpo11-like"/>
</dbReference>
<dbReference type="PANTHER" id="PTHR13946">
    <property type="entry name" value="DNA-DIRECTED RNA POLYMERASE I,II,III"/>
    <property type="match status" value="1"/>
</dbReference>
<dbReference type="PANTHER" id="PTHR13946:SF28">
    <property type="entry name" value="DNA-DIRECTED RNA POLYMERASES I AND III SUBUNIT RPAC2"/>
    <property type="match status" value="1"/>
</dbReference>
<dbReference type="Pfam" id="PF13656">
    <property type="entry name" value="RNA_pol_L_2"/>
    <property type="match status" value="1"/>
</dbReference>
<dbReference type="SUPFAM" id="SSF55257">
    <property type="entry name" value="RBP11-like subunits of RNA polymerase"/>
    <property type="match status" value="1"/>
</dbReference>
<dbReference type="PROSITE" id="PS01154">
    <property type="entry name" value="RNA_POL_L_13KD"/>
    <property type="match status" value="1"/>
</dbReference>
<proteinExistence type="evidence at protein level"/>